<reference key="1">
    <citation type="journal article" date="2009" name="Dev. Dyn.">
        <title>Nasal embryonic LHRH factor plays a role in the developmental migration and projection of gonadotropin-releasing hormone 3 neurons in zebrafish.</title>
        <authorList>
            <person name="Palevitch O."/>
            <person name="Abraham E."/>
            <person name="Borodovsky N."/>
            <person name="Levkowitz G."/>
            <person name="Zohar Y."/>
            <person name="Gothilf Y."/>
        </authorList>
    </citation>
    <scope>NUCLEOTIDE SEQUENCE [MRNA]</scope>
    <scope>FUNCTION</scope>
    <scope>DEVELOPMENTAL STAGE</scope>
</reference>
<keyword id="KW-1003">Cell membrane</keyword>
<keyword id="KW-0966">Cell projection</keyword>
<keyword id="KW-0963">Cytoplasm</keyword>
<keyword id="KW-0206">Cytoskeleton</keyword>
<keyword id="KW-0449">Lipoprotein</keyword>
<keyword id="KW-0472">Membrane</keyword>
<keyword id="KW-0519">Myristate</keyword>
<keyword id="KW-0539">Nucleus</keyword>
<keyword id="KW-1185">Reference proteome</keyword>
<keyword id="KW-0770">Synapse</keyword>
<keyword id="KW-0771">Synaptosome</keyword>
<name>NSMF_DANRE</name>
<evidence type="ECO:0000250" key="1"/>
<evidence type="ECO:0000256" key="2">
    <source>
        <dbReference type="SAM" id="MobiDB-lite"/>
    </source>
</evidence>
<evidence type="ECO:0000269" key="3">
    <source>
    </source>
</evidence>
<evidence type="ECO:0000305" key="4"/>
<protein>
    <recommendedName>
        <fullName>NMDA receptor synaptonuclear signaling and neuronal migration factor</fullName>
    </recommendedName>
    <alternativeName>
        <fullName>Nasal embryonic luteinizing hormone-releasing hormone factor</fullName>
        <shortName>Nasal embryonic LHRH factor</shortName>
    </alternativeName>
</protein>
<sequence length="570" mass="65267">MGTVVSKKENLRNDAISSVAAKVRAARAFGEYLSHTRPENRNRSDHLLSDTFIGQETDSPDISRLNNNNSLQPYSQHTLIVKPSQEELQQGSQSAPLPTSSKRRLSVERSLSSEDQQNQRRTESSVKPARVYTITRERDMLGGQGSEESLELEVLKRTSEPSQINPPTGLRGSHHRGSQHRGNNGPTHQHHYGHAPMAQPLQSSGSTHNIRDWGSRRSRSREDCTPDCVACIRPHCQSQRSLDLDTSPHGGGKQHKKLERMYSEDRVSSEDREDHTNSWFPKENMFSFQTATTTMQAISNFRKHLRMVGSRRVKAQTFVDRKAKSFSRSWSDPTPVKPDSLHDSRDSGDLQASSGNLDEEDCDDVDWEEERELERVACEGDDFIPPKLMLISSKVPKAEYVPNIIRRDDPSIIPILYDHEHATFDDILEEIEKKLTAYRKGCKIWNMLIFCQGGPGHLYLLKNKVATFAKVEKEEGMMQFWKKLGRFMSLLNPEPNLIHIMGCYVLGNANGEKLFQNLKRLMKPHGIEFKSPLELSAQGKEMIEMYFDFRLYRLWKTRQHSKLHDYDDLL</sequence>
<gene>
    <name type="primary">nsmf</name>
    <name type="synonym">nelf</name>
    <name type="synonym">nelfb</name>
</gene>
<dbReference type="EMBL" id="EU328156">
    <property type="protein sequence ID" value="ACA06112.1"/>
    <property type="molecule type" value="mRNA"/>
</dbReference>
<dbReference type="RefSeq" id="NP_001137373.1">
    <property type="nucleotide sequence ID" value="NM_001143901.1"/>
</dbReference>
<dbReference type="FunCoup" id="B8PYG1">
    <property type="interactions" value="1560"/>
</dbReference>
<dbReference type="STRING" id="7955.ENSDARP00000135554"/>
<dbReference type="PaxDb" id="7955-ENSDARP00000108693"/>
<dbReference type="GeneID" id="569891"/>
<dbReference type="KEGG" id="dre:569891"/>
<dbReference type="AGR" id="ZFIN:ZDB-GENE-080603-4"/>
<dbReference type="CTD" id="569891"/>
<dbReference type="ZFIN" id="ZDB-GENE-080603-4">
    <property type="gene designation" value="nsmfb"/>
</dbReference>
<dbReference type="eggNOG" id="ENOG502QRME">
    <property type="taxonomic scope" value="Eukaryota"/>
</dbReference>
<dbReference type="InParanoid" id="B8PYG1"/>
<dbReference type="OrthoDB" id="6161298at2759"/>
<dbReference type="PhylomeDB" id="B8PYG1"/>
<dbReference type="PRO" id="PR:B8PYG1"/>
<dbReference type="Proteomes" id="UP000000437">
    <property type="component" value="Alternate scaffold 5"/>
</dbReference>
<dbReference type="Proteomes" id="UP000000437">
    <property type="component" value="Chromosome 5"/>
</dbReference>
<dbReference type="GO" id="GO:0005938">
    <property type="term" value="C:cell cortex"/>
    <property type="evidence" value="ECO:0007669"/>
    <property type="project" value="UniProtKB-SubCell"/>
</dbReference>
<dbReference type="GO" id="GO:0005737">
    <property type="term" value="C:cytoplasm"/>
    <property type="evidence" value="ECO:0000318"/>
    <property type="project" value="GO_Central"/>
</dbReference>
<dbReference type="GO" id="GO:0005856">
    <property type="term" value="C:cytoskeleton"/>
    <property type="evidence" value="ECO:0007669"/>
    <property type="project" value="UniProtKB-SubCell"/>
</dbReference>
<dbReference type="GO" id="GO:0030425">
    <property type="term" value="C:dendrite"/>
    <property type="evidence" value="ECO:0007669"/>
    <property type="project" value="UniProtKB-SubCell"/>
</dbReference>
<dbReference type="GO" id="GO:0016363">
    <property type="term" value="C:nuclear matrix"/>
    <property type="evidence" value="ECO:0007669"/>
    <property type="project" value="UniProtKB-SubCell"/>
</dbReference>
<dbReference type="GO" id="GO:0031965">
    <property type="term" value="C:nuclear membrane"/>
    <property type="evidence" value="ECO:0007669"/>
    <property type="project" value="UniProtKB-SubCell"/>
</dbReference>
<dbReference type="GO" id="GO:0005634">
    <property type="term" value="C:nucleus"/>
    <property type="evidence" value="ECO:0000318"/>
    <property type="project" value="GO_Central"/>
</dbReference>
<dbReference type="GO" id="GO:0005886">
    <property type="term" value="C:plasma membrane"/>
    <property type="evidence" value="ECO:0007669"/>
    <property type="project" value="UniProtKB-SubCell"/>
</dbReference>
<dbReference type="GO" id="GO:0014069">
    <property type="term" value="C:postsynaptic density"/>
    <property type="evidence" value="ECO:0007669"/>
    <property type="project" value="UniProtKB-SubCell"/>
</dbReference>
<dbReference type="GO" id="GO:0045773">
    <property type="term" value="P:positive regulation of axon extension"/>
    <property type="evidence" value="ECO:0000315"/>
    <property type="project" value="UniProtKB"/>
</dbReference>
<dbReference type="GO" id="GO:2001224">
    <property type="term" value="P:positive regulation of neuron migration"/>
    <property type="evidence" value="ECO:0000315"/>
    <property type="project" value="UniProtKB"/>
</dbReference>
<dbReference type="GO" id="GO:0048168">
    <property type="term" value="P:regulation of neuronal synaptic plasticity"/>
    <property type="evidence" value="ECO:0007669"/>
    <property type="project" value="InterPro"/>
</dbReference>
<dbReference type="InterPro" id="IPR033374">
    <property type="entry name" value="NSMF"/>
</dbReference>
<dbReference type="PANTHER" id="PTHR32061">
    <property type="entry name" value="NMDA RECEPTOR SYNAPTONUCLEAR SIGNALING AND NEURONAL MIGRATION FACTOR"/>
    <property type="match status" value="1"/>
</dbReference>
<feature type="initiator methionine" description="Removed" evidence="1">
    <location>
        <position position="1"/>
    </location>
</feature>
<feature type="chain" id="PRO_0000421831" description="NMDA receptor synaptonuclear signaling and neuronal migration factor">
    <location>
        <begin position="2"/>
        <end position="570"/>
    </location>
</feature>
<feature type="region of interest" description="Disordered" evidence="2">
    <location>
        <begin position="85"/>
        <end position="224"/>
    </location>
</feature>
<feature type="region of interest" description="Disordered" evidence="2">
    <location>
        <begin position="239"/>
        <end position="278"/>
    </location>
</feature>
<feature type="region of interest" description="Disordered" evidence="2">
    <location>
        <begin position="327"/>
        <end position="362"/>
    </location>
</feature>
<feature type="compositionally biased region" description="Polar residues" evidence="2">
    <location>
        <begin position="86"/>
        <end position="99"/>
    </location>
</feature>
<feature type="compositionally biased region" description="Basic and acidic residues" evidence="2">
    <location>
        <begin position="209"/>
        <end position="224"/>
    </location>
</feature>
<feature type="compositionally biased region" description="Basic and acidic residues" evidence="2">
    <location>
        <begin position="259"/>
        <end position="276"/>
    </location>
</feature>
<feature type="compositionally biased region" description="Basic and acidic residues" evidence="2">
    <location>
        <begin position="339"/>
        <end position="348"/>
    </location>
</feature>
<feature type="lipid moiety-binding region" description="N-myristoyl glycine" evidence="1">
    <location>
        <position position="2"/>
    </location>
</feature>
<accession>B8PYG1</accession>
<comment type="function">
    <text evidence="3">Stimulates outgrowth of olfactory axons and migration of hypophysiotropic gonadotropin-releasing hormone 3 (GnRH3) neurons. May couple NMDA-sensitive glutamate receptor signaling to the nucleus and trigger long-lasting changes in the cytoarchitecture of dendrites and spine synapse processes.</text>
</comment>
<comment type="subcellular location">
    <subcellularLocation>
        <location evidence="1">Nucleus</location>
    </subcellularLocation>
    <subcellularLocation>
        <location evidence="1">Nucleus envelope</location>
    </subcellularLocation>
    <subcellularLocation>
        <location evidence="1">Nucleus membrane</location>
    </subcellularLocation>
    <subcellularLocation>
        <location evidence="1">Nucleus matrix</location>
    </subcellularLocation>
    <subcellularLocation>
        <location evidence="1">Cytoplasm</location>
    </subcellularLocation>
    <subcellularLocation>
        <location evidence="1">Cytoplasm</location>
        <location evidence="1">Cell cortex</location>
    </subcellularLocation>
    <subcellularLocation>
        <location evidence="1">Cytoplasm</location>
        <location evidence="1">Cytoskeleton</location>
    </subcellularLocation>
    <subcellularLocation>
        <location evidence="1">Cell membrane</location>
        <topology evidence="1">Peripheral membrane protein</topology>
    </subcellularLocation>
    <subcellularLocation>
        <location evidence="1">Cell projection</location>
        <location evidence="1">Dendrite</location>
    </subcellularLocation>
    <subcellularLocation>
        <location evidence="1">Synapse</location>
    </subcellularLocation>
    <subcellularLocation>
        <location evidence="1">Synapse</location>
        <location evidence="1">Synaptosome</location>
    </subcellularLocation>
    <subcellularLocation>
        <location evidence="1">Postsynaptic density</location>
    </subcellularLocation>
    <subcellularLocation>
        <location evidence="1">Membrane</location>
    </subcellularLocation>
</comment>
<comment type="developmental stage">
    <text evidence="3">Expressed in the olfactory bulb, telencephalon, hypothalamus, midbrain tegmentum, retina, hindbrain and the spinal cord. Expressed in GnRH3 neurons within the olfactory epithelium and terminal nerve.</text>
</comment>
<comment type="similarity">
    <text evidence="4">Belongs to the NSMF family.</text>
</comment>
<organism>
    <name type="scientific">Danio rerio</name>
    <name type="common">Zebrafish</name>
    <name type="synonym">Brachydanio rerio</name>
    <dbReference type="NCBI Taxonomy" id="7955"/>
    <lineage>
        <taxon>Eukaryota</taxon>
        <taxon>Metazoa</taxon>
        <taxon>Chordata</taxon>
        <taxon>Craniata</taxon>
        <taxon>Vertebrata</taxon>
        <taxon>Euteleostomi</taxon>
        <taxon>Actinopterygii</taxon>
        <taxon>Neopterygii</taxon>
        <taxon>Teleostei</taxon>
        <taxon>Ostariophysi</taxon>
        <taxon>Cypriniformes</taxon>
        <taxon>Danionidae</taxon>
        <taxon>Danioninae</taxon>
        <taxon>Danio</taxon>
    </lineage>
</organism>
<proteinExistence type="evidence at transcript level"/>